<keyword id="KW-0963">Cytoplasm</keyword>
<keyword id="KW-0413">Isomerase</keyword>
<keyword id="KW-0627">Porphyrin biosynthesis</keyword>
<keyword id="KW-0663">Pyridoxal phosphate</keyword>
<dbReference type="EC" id="5.4.3.8" evidence="1"/>
<dbReference type="EMBL" id="CP000681">
    <property type="protein sequence ID" value="ABP74847.1"/>
    <property type="molecule type" value="Genomic_DNA"/>
</dbReference>
<dbReference type="SMR" id="A4Y4G4"/>
<dbReference type="STRING" id="319224.Sputcn32_1119"/>
<dbReference type="KEGG" id="spc:Sputcn32_1119"/>
<dbReference type="eggNOG" id="COG0001">
    <property type="taxonomic scope" value="Bacteria"/>
</dbReference>
<dbReference type="HOGENOM" id="CLU_016922_1_5_6"/>
<dbReference type="UniPathway" id="UPA00251">
    <property type="reaction ID" value="UER00317"/>
</dbReference>
<dbReference type="GO" id="GO:0005737">
    <property type="term" value="C:cytoplasm"/>
    <property type="evidence" value="ECO:0007669"/>
    <property type="project" value="UniProtKB-SubCell"/>
</dbReference>
<dbReference type="GO" id="GO:0042286">
    <property type="term" value="F:glutamate-1-semialdehyde 2,1-aminomutase activity"/>
    <property type="evidence" value="ECO:0007669"/>
    <property type="project" value="UniProtKB-UniRule"/>
</dbReference>
<dbReference type="GO" id="GO:0030170">
    <property type="term" value="F:pyridoxal phosphate binding"/>
    <property type="evidence" value="ECO:0007669"/>
    <property type="project" value="InterPro"/>
</dbReference>
<dbReference type="GO" id="GO:0008483">
    <property type="term" value="F:transaminase activity"/>
    <property type="evidence" value="ECO:0007669"/>
    <property type="project" value="InterPro"/>
</dbReference>
<dbReference type="GO" id="GO:0006782">
    <property type="term" value="P:protoporphyrinogen IX biosynthetic process"/>
    <property type="evidence" value="ECO:0007669"/>
    <property type="project" value="UniProtKB-UniRule"/>
</dbReference>
<dbReference type="CDD" id="cd00610">
    <property type="entry name" value="OAT_like"/>
    <property type="match status" value="1"/>
</dbReference>
<dbReference type="FunFam" id="3.40.640.10:FF:000021">
    <property type="entry name" value="Glutamate-1-semialdehyde 2,1-aminomutase"/>
    <property type="match status" value="1"/>
</dbReference>
<dbReference type="Gene3D" id="3.90.1150.10">
    <property type="entry name" value="Aspartate Aminotransferase, domain 1"/>
    <property type="match status" value="1"/>
</dbReference>
<dbReference type="Gene3D" id="3.40.640.10">
    <property type="entry name" value="Type I PLP-dependent aspartate aminotransferase-like (Major domain)"/>
    <property type="match status" value="1"/>
</dbReference>
<dbReference type="HAMAP" id="MF_00375">
    <property type="entry name" value="HemL_aminotrans_3"/>
    <property type="match status" value="1"/>
</dbReference>
<dbReference type="InterPro" id="IPR004639">
    <property type="entry name" value="4pyrrol_synth_GluAld_NH2Trfase"/>
</dbReference>
<dbReference type="InterPro" id="IPR005814">
    <property type="entry name" value="Aminotrans_3"/>
</dbReference>
<dbReference type="InterPro" id="IPR049704">
    <property type="entry name" value="Aminotrans_3_PPA_site"/>
</dbReference>
<dbReference type="InterPro" id="IPR015424">
    <property type="entry name" value="PyrdxlP-dep_Trfase"/>
</dbReference>
<dbReference type="InterPro" id="IPR015421">
    <property type="entry name" value="PyrdxlP-dep_Trfase_major"/>
</dbReference>
<dbReference type="InterPro" id="IPR015422">
    <property type="entry name" value="PyrdxlP-dep_Trfase_small"/>
</dbReference>
<dbReference type="NCBIfam" id="TIGR00713">
    <property type="entry name" value="hemL"/>
    <property type="match status" value="1"/>
</dbReference>
<dbReference type="NCBIfam" id="NF000818">
    <property type="entry name" value="PRK00062.1"/>
    <property type="match status" value="1"/>
</dbReference>
<dbReference type="PANTHER" id="PTHR43713">
    <property type="entry name" value="GLUTAMATE-1-SEMIALDEHYDE 2,1-AMINOMUTASE"/>
    <property type="match status" value="1"/>
</dbReference>
<dbReference type="PANTHER" id="PTHR43713:SF3">
    <property type="entry name" value="GLUTAMATE-1-SEMIALDEHYDE 2,1-AMINOMUTASE 1, CHLOROPLASTIC-RELATED"/>
    <property type="match status" value="1"/>
</dbReference>
<dbReference type="Pfam" id="PF00202">
    <property type="entry name" value="Aminotran_3"/>
    <property type="match status" value="1"/>
</dbReference>
<dbReference type="SUPFAM" id="SSF53383">
    <property type="entry name" value="PLP-dependent transferases"/>
    <property type="match status" value="1"/>
</dbReference>
<dbReference type="PROSITE" id="PS00600">
    <property type="entry name" value="AA_TRANSFER_CLASS_3"/>
    <property type="match status" value="1"/>
</dbReference>
<accession>A4Y4G4</accession>
<evidence type="ECO:0000255" key="1">
    <source>
        <dbReference type="HAMAP-Rule" id="MF_00375"/>
    </source>
</evidence>
<reference key="1">
    <citation type="submission" date="2007-04" db="EMBL/GenBank/DDBJ databases">
        <title>Complete sequence of Shewanella putrefaciens CN-32.</title>
        <authorList>
            <consortium name="US DOE Joint Genome Institute"/>
            <person name="Copeland A."/>
            <person name="Lucas S."/>
            <person name="Lapidus A."/>
            <person name="Barry K."/>
            <person name="Detter J.C."/>
            <person name="Glavina del Rio T."/>
            <person name="Hammon N."/>
            <person name="Israni S."/>
            <person name="Dalin E."/>
            <person name="Tice H."/>
            <person name="Pitluck S."/>
            <person name="Chain P."/>
            <person name="Malfatti S."/>
            <person name="Shin M."/>
            <person name="Vergez L."/>
            <person name="Schmutz J."/>
            <person name="Larimer F."/>
            <person name="Land M."/>
            <person name="Hauser L."/>
            <person name="Kyrpides N."/>
            <person name="Mikhailova N."/>
            <person name="Romine M.F."/>
            <person name="Fredrickson J."/>
            <person name="Tiedje J."/>
            <person name="Richardson P."/>
        </authorList>
    </citation>
    <scope>NUCLEOTIDE SEQUENCE [LARGE SCALE GENOMIC DNA]</scope>
    <source>
        <strain>CN-32 / ATCC BAA-453</strain>
    </source>
</reference>
<proteinExistence type="inferred from homology"/>
<sequence length="430" mass="46122">MTRSEALFEQAKKTIPGGVNSPVRAFNGVGGSPLFIEKANGAYIYDADGKAYIDYVGSWGPMILGHNHPKIRAAVLAAVENGLSFGAPTELEVQMAEKVISMVPSIEQVRMVSSGTEATMSAIRLARGFTNRDKILKFEGCYHGHADCLLVKAGSGALTLGQPSSPGIPEDFAKHTLTAVYNDLDSVRTLFEQYPTEISCIIIEPVAGNMNCIPPVPGFLQGLRDMCDEFGALLIIDEVMTGFRVSQSGAQGYYGVTPDLTTLGKVIGGGMPVGAFGGRKDVMQFIAPTGPVYQAGTLSGNPIAMSAGLAQMDALCEEGLYEALSAKTKRIAEGFKAAADKHGIPMAINYVGGMFGFFFTEQEQITRFDQVTKCNIEHFRTFYHGMLDEGVYLAPSAYEAGFLSMAHGEEELRLTLEAADRVLASMKTES</sequence>
<comment type="catalytic activity">
    <reaction evidence="1">
        <text>(S)-4-amino-5-oxopentanoate = 5-aminolevulinate</text>
        <dbReference type="Rhea" id="RHEA:14265"/>
        <dbReference type="ChEBI" id="CHEBI:57501"/>
        <dbReference type="ChEBI" id="CHEBI:356416"/>
        <dbReference type="EC" id="5.4.3.8"/>
    </reaction>
</comment>
<comment type="cofactor">
    <cofactor evidence="1">
        <name>pyridoxal 5'-phosphate</name>
        <dbReference type="ChEBI" id="CHEBI:597326"/>
    </cofactor>
</comment>
<comment type="pathway">
    <text evidence="1">Porphyrin-containing compound metabolism; protoporphyrin-IX biosynthesis; 5-aminolevulinate from L-glutamyl-tRNA(Glu): step 2/2.</text>
</comment>
<comment type="subunit">
    <text evidence="1">Homodimer.</text>
</comment>
<comment type="subcellular location">
    <subcellularLocation>
        <location evidence="1">Cytoplasm</location>
    </subcellularLocation>
</comment>
<comment type="similarity">
    <text evidence="1">Belongs to the class-III pyridoxal-phosphate-dependent aminotransferase family. HemL subfamily.</text>
</comment>
<protein>
    <recommendedName>
        <fullName evidence="1">Glutamate-1-semialdehyde 2,1-aminomutase</fullName>
        <shortName evidence="1">GSA</shortName>
        <ecNumber evidence="1">5.4.3.8</ecNumber>
    </recommendedName>
    <alternativeName>
        <fullName evidence="1">Glutamate-1-semialdehyde aminotransferase</fullName>
        <shortName evidence="1">GSA-AT</shortName>
    </alternativeName>
</protein>
<name>GSA_SHEPC</name>
<gene>
    <name evidence="1" type="primary">hemL</name>
    <name type="ordered locus">Sputcn32_1119</name>
</gene>
<organism>
    <name type="scientific">Shewanella putrefaciens (strain CN-32 / ATCC BAA-453)</name>
    <dbReference type="NCBI Taxonomy" id="319224"/>
    <lineage>
        <taxon>Bacteria</taxon>
        <taxon>Pseudomonadati</taxon>
        <taxon>Pseudomonadota</taxon>
        <taxon>Gammaproteobacteria</taxon>
        <taxon>Alteromonadales</taxon>
        <taxon>Shewanellaceae</taxon>
        <taxon>Shewanella</taxon>
    </lineage>
</organism>
<feature type="chain" id="PRO_1000060002" description="Glutamate-1-semialdehyde 2,1-aminomutase">
    <location>
        <begin position="1"/>
        <end position="430"/>
    </location>
</feature>
<feature type="modified residue" description="N6-(pyridoxal phosphate)lysine" evidence="1">
    <location>
        <position position="265"/>
    </location>
</feature>